<reference key="1">
    <citation type="submission" date="2007-05" db="EMBL/GenBank/DDBJ databases">
        <title>Complete sequence of chromosome of Acidiphilium cryptum JF-5.</title>
        <authorList>
            <consortium name="US DOE Joint Genome Institute"/>
            <person name="Copeland A."/>
            <person name="Lucas S."/>
            <person name="Lapidus A."/>
            <person name="Barry K."/>
            <person name="Detter J.C."/>
            <person name="Glavina del Rio T."/>
            <person name="Hammon N."/>
            <person name="Israni S."/>
            <person name="Dalin E."/>
            <person name="Tice H."/>
            <person name="Pitluck S."/>
            <person name="Sims D."/>
            <person name="Brettin T."/>
            <person name="Bruce D."/>
            <person name="Han C."/>
            <person name="Schmutz J."/>
            <person name="Larimer F."/>
            <person name="Land M."/>
            <person name="Hauser L."/>
            <person name="Kyrpides N."/>
            <person name="Kim E."/>
            <person name="Magnuson T."/>
            <person name="Richardson P."/>
        </authorList>
    </citation>
    <scope>NUCLEOTIDE SEQUENCE [LARGE SCALE GENOMIC DNA]</scope>
    <source>
        <strain>JF-5</strain>
    </source>
</reference>
<sequence>MSTFYTVLPILFLAIAGMIMLMSGVFTDRDHSFAITAASIVVLAIAARLLVAAPGGTIFHGLYQTNDFTRFADVLVALGAIGALALSVTFNRNIGITRFEFPVLVLFAVTGMVVLVSASDLITLYIGFEIQSLALYVLAAFARHNLRSSEAGLKYFVLGALSSGLLLYGISLVYGFAGTTNFAGIAHALAGHPTAAVGSTIGLVFVLVGLAFKISAAPFHMWTPDVYEGAPTSVTAFFATAPKIAVFALLLRVMLGPFGPVLGQWRDLVQIIAAASMVIGAIGAIRQTSIKRLMGYSSIGHMGYALMGLAAGTAAGVSGALIYLAIYLVMSLGTFGCIIAMSRGRQPVERIADLAGMASDDPRFAFVLAVMMWSMAGIPPLAGFFGKFYVFAAAINAGLGPLAVLGIITSVIAAFYYLRVIKVMYFDAGEPGLDRRSAGVSLVMGAAAAFTVLFVFHPSTLTTLSTMAAHALMTSQGF</sequence>
<protein>
    <recommendedName>
        <fullName evidence="1">NADH-quinone oxidoreductase subunit N 1</fullName>
        <ecNumber evidence="1">7.1.1.-</ecNumber>
    </recommendedName>
    <alternativeName>
        <fullName evidence="1">NADH dehydrogenase I subunit N 1</fullName>
    </alternativeName>
    <alternativeName>
        <fullName evidence="1">NDH-1 subunit N 1</fullName>
    </alternativeName>
</protein>
<name>NUON1_ACICJ</name>
<dbReference type="EC" id="7.1.1.-" evidence="1"/>
<dbReference type="EMBL" id="CP000697">
    <property type="protein sequence ID" value="ABQ30153.1"/>
    <property type="molecule type" value="Genomic_DNA"/>
</dbReference>
<dbReference type="SMR" id="A5FX21"/>
<dbReference type="STRING" id="349163.Acry_0934"/>
<dbReference type="KEGG" id="acr:Acry_0934"/>
<dbReference type="eggNOG" id="COG1007">
    <property type="taxonomic scope" value="Bacteria"/>
</dbReference>
<dbReference type="HOGENOM" id="CLU_007100_1_3_5"/>
<dbReference type="Proteomes" id="UP000000245">
    <property type="component" value="Chromosome"/>
</dbReference>
<dbReference type="GO" id="GO:0005886">
    <property type="term" value="C:plasma membrane"/>
    <property type="evidence" value="ECO:0007669"/>
    <property type="project" value="UniProtKB-SubCell"/>
</dbReference>
<dbReference type="GO" id="GO:0008137">
    <property type="term" value="F:NADH dehydrogenase (ubiquinone) activity"/>
    <property type="evidence" value="ECO:0007669"/>
    <property type="project" value="InterPro"/>
</dbReference>
<dbReference type="GO" id="GO:0050136">
    <property type="term" value="F:NADH:ubiquinone reductase (non-electrogenic) activity"/>
    <property type="evidence" value="ECO:0007669"/>
    <property type="project" value="UniProtKB-UniRule"/>
</dbReference>
<dbReference type="GO" id="GO:0048038">
    <property type="term" value="F:quinone binding"/>
    <property type="evidence" value="ECO:0007669"/>
    <property type="project" value="UniProtKB-KW"/>
</dbReference>
<dbReference type="GO" id="GO:0042773">
    <property type="term" value="P:ATP synthesis coupled electron transport"/>
    <property type="evidence" value="ECO:0007669"/>
    <property type="project" value="InterPro"/>
</dbReference>
<dbReference type="HAMAP" id="MF_00445">
    <property type="entry name" value="NDH1_NuoN_1"/>
    <property type="match status" value="1"/>
</dbReference>
<dbReference type="InterPro" id="IPR010096">
    <property type="entry name" value="NADH-Q_OxRdtase_suN/2"/>
</dbReference>
<dbReference type="InterPro" id="IPR001750">
    <property type="entry name" value="ND/Mrp_TM"/>
</dbReference>
<dbReference type="NCBIfam" id="TIGR01770">
    <property type="entry name" value="NDH_I_N"/>
    <property type="match status" value="1"/>
</dbReference>
<dbReference type="NCBIfam" id="NF004440">
    <property type="entry name" value="PRK05777.1-3"/>
    <property type="match status" value="1"/>
</dbReference>
<dbReference type="PANTHER" id="PTHR22773">
    <property type="entry name" value="NADH DEHYDROGENASE"/>
    <property type="match status" value="1"/>
</dbReference>
<dbReference type="Pfam" id="PF00361">
    <property type="entry name" value="Proton_antipo_M"/>
    <property type="match status" value="1"/>
</dbReference>
<comment type="function">
    <text evidence="1">NDH-1 shuttles electrons from NADH, via FMN and iron-sulfur (Fe-S) centers, to quinones in the respiratory chain. The immediate electron acceptor for the enzyme in this species is believed to be ubiquinone. Couples the redox reaction to proton translocation (for every two electrons transferred, four hydrogen ions are translocated across the cytoplasmic membrane), and thus conserves the redox energy in a proton gradient.</text>
</comment>
<comment type="catalytic activity">
    <reaction evidence="1">
        <text>a quinone + NADH + 5 H(+)(in) = a quinol + NAD(+) + 4 H(+)(out)</text>
        <dbReference type="Rhea" id="RHEA:57888"/>
        <dbReference type="ChEBI" id="CHEBI:15378"/>
        <dbReference type="ChEBI" id="CHEBI:24646"/>
        <dbReference type="ChEBI" id="CHEBI:57540"/>
        <dbReference type="ChEBI" id="CHEBI:57945"/>
        <dbReference type="ChEBI" id="CHEBI:132124"/>
    </reaction>
</comment>
<comment type="subunit">
    <text evidence="1">NDH-1 is composed of 14 different subunits. Subunits NuoA, H, J, K, L, M, N constitute the membrane sector of the complex.</text>
</comment>
<comment type="subcellular location">
    <subcellularLocation>
        <location evidence="1">Cell inner membrane</location>
        <topology evidence="1">Multi-pass membrane protein</topology>
    </subcellularLocation>
</comment>
<comment type="similarity">
    <text evidence="1">Belongs to the complex I subunit 2 family.</text>
</comment>
<feature type="chain" id="PRO_5000244728" description="NADH-quinone oxidoreductase subunit N 1">
    <location>
        <begin position="1"/>
        <end position="478"/>
    </location>
</feature>
<feature type="transmembrane region" description="Helical" evidence="1">
    <location>
        <begin position="6"/>
        <end position="26"/>
    </location>
</feature>
<feature type="transmembrane region" description="Helical" evidence="1">
    <location>
        <begin position="33"/>
        <end position="53"/>
    </location>
</feature>
<feature type="transmembrane region" description="Helical" evidence="1">
    <location>
        <begin position="71"/>
        <end position="91"/>
    </location>
</feature>
<feature type="transmembrane region" description="Helical" evidence="1">
    <location>
        <begin position="99"/>
        <end position="119"/>
    </location>
</feature>
<feature type="transmembrane region" description="Helical" evidence="1">
    <location>
        <begin position="121"/>
        <end position="141"/>
    </location>
</feature>
<feature type="transmembrane region" description="Helical" evidence="1">
    <location>
        <begin position="156"/>
        <end position="176"/>
    </location>
</feature>
<feature type="transmembrane region" description="Helical" evidence="1">
    <location>
        <begin position="193"/>
        <end position="212"/>
    </location>
</feature>
<feature type="transmembrane region" description="Helical" evidence="1">
    <location>
        <begin position="244"/>
        <end position="264"/>
    </location>
</feature>
<feature type="transmembrane region" description="Helical" evidence="1">
    <location>
        <begin position="265"/>
        <end position="285"/>
    </location>
</feature>
<feature type="transmembrane region" description="Helical" evidence="1">
    <location>
        <begin position="299"/>
        <end position="319"/>
    </location>
</feature>
<feature type="transmembrane region" description="Helical" evidence="1">
    <location>
        <begin position="321"/>
        <end position="341"/>
    </location>
</feature>
<feature type="transmembrane region" description="Helical" evidence="1">
    <location>
        <begin position="364"/>
        <end position="384"/>
    </location>
</feature>
<feature type="transmembrane region" description="Helical" evidence="1">
    <location>
        <begin position="388"/>
        <end position="408"/>
    </location>
</feature>
<feature type="transmembrane region" description="Helical" evidence="1">
    <location>
        <begin position="438"/>
        <end position="458"/>
    </location>
</feature>
<gene>
    <name evidence="1" type="primary">nuoN1</name>
    <name type="ordered locus">Acry_0934</name>
</gene>
<keyword id="KW-0997">Cell inner membrane</keyword>
<keyword id="KW-1003">Cell membrane</keyword>
<keyword id="KW-0472">Membrane</keyword>
<keyword id="KW-0520">NAD</keyword>
<keyword id="KW-0874">Quinone</keyword>
<keyword id="KW-1185">Reference proteome</keyword>
<keyword id="KW-1278">Translocase</keyword>
<keyword id="KW-0812">Transmembrane</keyword>
<keyword id="KW-1133">Transmembrane helix</keyword>
<keyword id="KW-0813">Transport</keyword>
<keyword id="KW-0830">Ubiquinone</keyword>
<accession>A5FX21</accession>
<organism>
    <name type="scientific">Acidiphilium cryptum (strain JF-5)</name>
    <dbReference type="NCBI Taxonomy" id="349163"/>
    <lineage>
        <taxon>Bacteria</taxon>
        <taxon>Pseudomonadati</taxon>
        <taxon>Pseudomonadota</taxon>
        <taxon>Alphaproteobacteria</taxon>
        <taxon>Acetobacterales</taxon>
        <taxon>Acidocellaceae</taxon>
        <taxon>Acidiphilium</taxon>
    </lineage>
</organism>
<proteinExistence type="inferred from homology"/>
<evidence type="ECO:0000255" key="1">
    <source>
        <dbReference type="HAMAP-Rule" id="MF_00445"/>
    </source>
</evidence>